<keyword id="KW-0025">Alternative splicing</keyword>
<keyword id="KW-0067">ATP-binding</keyword>
<keyword id="KW-1003">Cell membrane</keyword>
<keyword id="KW-0256">Endoplasmic reticulum</keyword>
<keyword id="KW-0276">Fatty acid metabolism</keyword>
<keyword id="KW-0436">Ligase</keyword>
<keyword id="KW-0443">Lipid metabolism</keyword>
<keyword id="KW-0445">Lipid transport</keyword>
<keyword id="KW-0472">Membrane</keyword>
<keyword id="KW-0492">Microsome</keyword>
<keyword id="KW-0547">Nucleotide-binding</keyword>
<keyword id="KW-0560">Oxidoreductase</keyword>
<keyword id="KW-0597">Phosphoprotein</keyword>
<keyword id="KW-1267">Proteomics identification</keyword>
<keyword id="KW-1185">Reference proteome</keyword>
<keyword id="KW-0812">Transmembrane</keyword>
<keyword id="KW-1133">Transmembrane helix</keyword>
<keyword id="KW-0813">Transport</keyword>
<organism>
    <name type="scientific">Homo sapiens</name>
    <name type="common">Human</name>
    <dbReference type="NCBI Taxonomy" id="9606"/>
    <lineage>
        <taxon>Eukaryota</taxon>
        <taxon>Metazoa</taxon>
        <taxon>Chordata</taxon>
        <taxon>Craniata</taxon>
        <taxon>Vertebrata</taxon>
        <taxon>Euteleostomi</taxon>
        <taxon>Mammalia</taxon>
        <taxon>Eutheria</taxon>
        <taxon>Euarchontoglires</taxon>
        <taxon>Primates</taxon>
        <taxon>Haplorrhini</taxon>
        <taxon>Catarrhini</taxon>
        <taxon>Hominidae</taxon>
        <taxon>Homo</taxon>
    </lineage>
</organism>
<proteinExistence type="evidence at protein level"/>
<gene>
    <name type="primary">SLC27A5</name>
    <name type="synonym">ACSB</name>
    <name type="synonym">ACSVL6</name>
    <name type="synonym">FACVL3</name>
    <name type="synonym">FATP5</name>
</gene>
<evidence type="ECO:0000250" key="1">
    <source>
        <dbReference type="UniProtKB" id="Q4LDG0"/>
    </source>
</evidence>
<evidence type="ECO:0000250" key="2">
    <source>
        <dbReference type="UniProtKB" id="Q9ES38"/>
    </source>
</evidence>
<evidence type="ECO:0000255" key="3"/>
<evidence type="ECO:0000269" key="4">
    <source>
    </source>
</evidence>
<evidence type="ECO:0000269" key="5">
    <source>
    </source>
</evidence>
<evidence type="ECO:0000269" key="6">
    <source>
    </source>
</evidence>
<evidence type="ECO:0000269" key="7">
    <source>
    </source>
</evidence>
<evidence type="ECO:0000269" key="8">
    <source>
    </source>
</evidence>
<evidence type="ECO:0000303" key="9">
    <source>
    </source>
</evidence>
<evidence type="ECO:0000303" key="10">
    <source>
    </source>
</evidence>
<evidence type="ECO:0000303" key="11">
    <source>
    </source>
</evidence>
<evidence type="ECO:0000303" key="12">
    <source>
    </source>
</evidence>
<evidence type="ECO:0000303" key="13">
    <source>
    </source>
</evidence>
<evidence type="ECO:0000303" key="14">
    <source>
    </source>
</evidence>
<evidence type="ECO:0000305" key="15"/>
<evidence type="ECO:0000305" key="16">
    <source>
    </source>
</evidence>
<evidence type="ECO:0000305" key="17">
    <source>
    </source>
</evidence>
<evidence type="ECO:0000305" key="18">
    <source>
    </source>
</evidence>
<evidence type="ECO:0007744" key="19">
    <source>
    </source>
</evidence>
<reference key="1">
    <citation type="journal article" date="1999" name="Mol. Genet. Metab.">
        <title>Human liver-specific very-long-chain acyl-coenzyme A synthetase: cDNA cloning and characterization of a second enzymatically active protein.</title>
        <authorList>
            <person name="Steinberg S.J."/>
            <person name="Wang S.J."/>
            <person name="McGuinness M.C."/>
            <person name="Watkins P.A."/>
        </authorList>
    </citation>
    <scope>NUCLEOTIDE SEQUENCE [MRNA] (ISOFORM 1)</scope>
    <scope>FUNCTION</scope>
    <scope>CATALYTIC ACTIVITY</scope>
    <scope>TISSUE SPECIFICITY</scope>
    <scope>SUBCELLULAR LOCATION</scope>
</reference>
<reference key="2">
    <citation type="journal article" date="2004" name="Nat. Genet.">
        <title>Complete sequencing and characterization of 21,243 full-length human cDNAs.</title>
        <authorList>
            <person name="Ota T."/>
            <person name="Suzuki Y."/>
            <person name="Nishikawa T."/>
            <person name="Otsuki T."/>
            <person name="Sugiyama T."/>
            <person name="Irie R."/>
            <person name="Wakamatsu A."/>
            <person name="Hayashi K."/>
            <person name="Sato H."/>
            <person name="Nagai K."/>
            <person name="Kimura K."/>
            <person name="Makita H."/>
            <person name="Sekine M."/>
            <person name="Obayashi M."/>
            <person name="Nishi T."/>
            <person name="Shibahara T."/>
            <person name="Tanaka T."/>
            <person name="Ishii S."/>
            <person name="Yamamoto J."/>
            <person name="Saito K."/>
            <person name="Kawai Y."/>
            <person name="Isono Y."/>
            <person name="Nakamura Y."/>
            <person name="Nagahari K."/>
            <person name="Murakami K."/>
            <person name="Yasuda T."/>
            <person name="Iwayanagi T."/>
            <person name="Wagatsuma M."/>
            <person name="Shiratori A."/>
            <person name="Sudo H."/>
            <person name="Hosoiri T."/>
            <person name="Kaku Y."/>
            <person name="Kodaira H."/>
            <person name="Kondo H."/>
            <person name="Sugawara M."/>
            <person name="Takahashi M."/>
            <person name="Kanda K."/>
            <person name="Yokoi T."/>
            <person name="Furuya T."/>
            <person name="Kikkawa E."/>
            <person name="Omura Y."/>
            <person name="Abe K."/>
            <person name="Kamihara K."/>
            <person name="Katsuta N."/>
            <person name="Sato K."/>
            <person name="Tanikawa M."/>
            <person name="Yamazaki M."/>
            <person name="Ninomiya K."/>
            <person name="Ishibashi T."/>
            <person name="Yamashita H."/>
            <person name="Murakawa K."/>
            <person name="Fujimori K."/>
            <person name="Tanai H."/>
            <person name="Kimata M."/>
            <person name="Watanabe M."/>
            <person name="Hiraoka S."/>
            <person name="Chiba Y."/>
            <person name="Ishida S."/>
            <person name="Ono Y."/>
            <person name="Takiguchi S."/>
            <person name="Watanabe S."/>
            <person name="Yosida M."/>
            <person name="Hotuta T."/>
            <person name="Kusano J."/>
            <person name="Kanehori K."/>
            <person name="Takahashi-Fujii A."/>
            <person name="Hara H."/>
            <person name="Tanase T.-O."/>
            <person name="Nomura Y."/>
            <person name="Togiya S."/>
            <person name="Komai F."/>
            <person name="Hara R."/>
            <person name="Takeuchi K."/>
            <person name="Arita M."/>
            <person name="Imose N."/>
            <person name="Musashino K."/>
            <person name="Yuuki H."/>
            <person name="Oshima A."/>
            <person name="Sasaki N."/>
            <person name="Aotsuka S."/>
            <person name="Yoshikawa Y."/>
            <person name="Matsunawa H."/>
            <person name="Ichihara T."/>
            <person name="Shiohata N."/>
            <person name="Sano S."/>
            <person name="Moriya S."/>
            <person name="Momiyama H."/>
            <person name="Satoh N."/>
            <person name="Takami S."/>
            <person name="Terashima Y."/>
            <person name="Suzuki O."/>
            <person name="Nakagawa S."/>
            <person name="Senoh A."/>
            <person name="Mizoguchi H."/>
            <person name="Goto Y."/>
            <person name="Shimizu F."/>
            <person name="Wakebe H."/>
            <person name="Hishigaki H."/>
            <person name="Watanabe T."/>
            <person name="Sugiyama A."/>
            <person name="Takemoto M."/>
            <person name="Kawakami B."/>
            <person name="Yamazaki M."/>
            <person name="Watanabe K."/>
            <person name="Kumagai A."/>
            <person name="Itakura S."/>
            <person name="Fukuzumi Y."/>
            <person name="Fujimori Y."/>
            <person name="Komiyama M."/>
            <person name="Tashiro H."/>
            <person name="Tanigami A."/>
            <person name="Fujiwara T."/>
            <person name="Ono T."/>
            <person name="Yamada K."/>
            <person name="Fujii Y."/>
            <person name="Ozaki K."/>
            <person name="Hirao M."/>
            <person name="Ohmori Y."/>
            <person name="Kawabata A."/>
            <person name="Hikiji T."/>
            <person name="Kobatake N."/>
            <person name="Inagaki H."/>
            <person name="Ikema Y."/>
            <person name="Okamoto S."/>
            <person name="Okitani R."/>
            <person name="Kawakami T."/>
            <person name="Noguchi S."/>
            <person name="Itoh T."/>
            <person name="Shigeta K."/>
            <person name="Senba T."/>
            <person name="Matsumura K."/>
            <person name="Nakajima Y."/>
            <person name="Mizuno T."/>
            <person name="Morinaga M."/>
            <person name="Sasaki M."/>
            <person name="Togashi T."/>
            <person name="Oyama M."/>
            <person name="Hata H."/>
            <person name="Watanabe M."/>
            <person name="Komatsu T."/>
            <person name="Mizushima-Sugano J."/>
            <person name="Satoh T."/>
            <person name="Shirai Y."/>
            <person name="Takahashi Y."/>
            <person name="Nakagawa K."/>
            <person name="Okumura K."/>
            <person name="Nagase T."/>
            <person name="Nomura N."/>
            <person name="Kikuchi H."/>
            <person name="Masuho Y."/>
            <person name="Yamashita R."/>
            <person name="Nakai K."/>
            <person name="Yada T."/>
            <person name="Nakamura Y."/>
            <person name="Ohara O."/>
            <person name="Isogai T."/>
            <person name="Sugano S."/>
        </authorList>
    </citation>
    <scope>NUCLEOTIDE SEQUENCE [LARGE SCALE MRNA] (ISOFORMS 1 AND 2)</scope>
    <source>
        <tissue>Liver</tissue>
    </source>
</reference>
<reference key="3">
    <citation type="journal article" date="2004" name="Nature">
        <title>The DNA sequence and biology of human chromosome 19.</title>
        <authorList>
            <person name="Grimwood J."/>
            <person name="Gordon L.A."/>
            <person name="Olsen A.S."/>
            <person name="Terry A."/>
            <person name="Schmutz J."/>
            <person name="Lamerdin J.E."/>
            <person name="Hellsten U."/>
            <person name="Goodstein D."/>
            <person name="Couronne O."/>
            <person name="Tran-Gyamfi M."/>
            <person name="Aerts A."/>
            <person name="Altherr M."/>
            <person name="Ashworth L."/>
            <person name="Bajorek E."/>
            <person name="Black S."/>
            <person name="Branscomb E."/>
            <person name="Caenepeel S."/>
            <person name="Carrano A.V."/>
            <person name="Caoile C."/>
            <person name="Chan Y.M."/>
            <person name="Christensen M."/>
            <person name="Cleland C.A."/>
            <person name="Copeland A."/>
            <person name="Dalin E."/>
            <person name="Dehal P."/>
            <person name="Denys M."/>
            <person name="Detter J.C."/>
            <person name="Escobar J."/>
            <person name="Flowers D."/>
            <person name="Fotopulos D."/>
            <person name="Garcia C."/>
            <person name="Georgescu A.M."/>
            <person name="Glavina T."/>
            <person name="Gomez M."/>
            <person name="Gonzales E."/>
            <person name="Groza M."/>
            <person name="Hammon N."/>
            <person name="Hawkins T."/>
            <person name="Haydu L."/>
            <person name="Ho I."/>
            <person name="Huang W."/>
            <person name="Israni S."/>
            <person name="Jett J."/>
            <person name="Kadner K."/>
            <person name="Kimball H."/>
            <person name="Kobayashi A."/>
            <person name="Larionov V."/>
            <person name="Leem S.-H."/>
            <person name="Lopez F."/>
            <person name="Lou Y."/>
            <person name="Lowry S."/>
            <person name="Malfatti S."/>
            <person name="Martinez D."/>
            <person name="McCready P.M."/>
            <person name="Medina C."/>
            <person name="Morgan J."/>
            <person name="Nelson K."/>
            <person name="Nolan M."/>
            <person name="Ovcharenko I."/>
            <person name="Pitluck S."/>
            <person name="Pollard M."/>
            <person name="Popkie A.P."/>
            <person name="Predki P."/>
            <person name="Quan G."/>
            <person name="Ramirez L."/>
            <person name="Rash S."/>
            <person name="Retterer J."/>
            <person name="Rodriguez A."/>
            <person name="Rogers S."/>
            <person name="Salamov A."/>
            <person name="Salazar A."/>
            <person name="She X."/>
            <person name="Smith D."/>
            <person name="Slezak T."/>
            <person name="Solovyev V."/>
            <person name="Thayer N."/>
            <person name="Tice H."/>
            <person name="Tsai M."/>
            <person name="Ustaszewska A."/>
            <person name="Vo N."/>
            <person name="Wagner M."/>
            <person name="Wheeler J."/>
            <person name="Wu K."/>
            <person name="Xie G."/>
            <person name="Yang J."/>
            <person name="Dubchak I."/>
            <person name="Furey T.S."/>
            <person name="DeJong P."/>
            <person name="Dickson M."/>
            <person name="Gordon D."/>
            <person name="Eichler E.E."/>
            <person name="Pennacchio L.A."/>
            <person name="Richardson P."/>
            <person name="Stubbs L."/>
            <person name="Rokhsar D.S."/>
            <person name="Myers R.M."/>
            <person name="Rubin E.M."/>
            <person name="Lucas S.M."/>
        </authorList>
    </citation>
    <scope>NUCLEOTIDE SEQUENCE [LARGE SCALE GENOMIC DNA]</scope>
</reference>
<reference key="4">
    <citation type="submission" date="2005-07" db="EMBL/GenBank/DDBJ databases">
        <authorList>
            <person name="Mural R.J."/>
            <person name="Istrail S."/>
            <person name="Sutton G.G."/>
            <person name="Florea L."/>
            <person name="Halpern A.L."/>
            <person name="Mobarry C.M."/>
            <person name="Lippert R."/>
            <person name="Walenz B."/>
            <person name="Shatkay H."/>
            <person name="Dew I."/>
            <person name="Miller J.R."/>
            <person name="Flanigan M.J."/>
            <person name="Edwards N.J."/>
            <person name="Bolanos R."/>
            <person name="Fasulo D."/>
            <person name="Halldorsson B.V."/>
            <person name="Hannenhalli S."/>
            <person name="Turner R."/>
            <person name="Yooseph S."/>
            <person name="Lu F."/>
            <person name="Nusskern D.R."/>
            <person name="Shue B.C."/>
            <person name="Zheng X.H."/>
            <person name="Zhong F."/>
            <person name="Delcher A.L."/>
            <person name="Huson D.H."/>
            <person name="Kravitz S.A."/>
            <person name="Mouchard L."/>
            <person name="Reinert K."/>
            <person name="Remington K.A."/>
            <person name="Clark A.G."/>
            <person name="Waterman M.S."/>
            <person name="Eichler E.E."/>
            <person name="Adams M.D."/>
            <person name="Hunkapiller M.W."/>
            <person name="Myers E.W."/>
            <person name="Venter J.C."/>
        </authorList>
    </citation>
    <scope>NUCLEOTIDE SEQUENCE [LARGE SCALE GENOMIC DNA]</scope>
</reference>
<reference key="5">
    <citation type="journal article" date="2000" name="J. Biol. Chem.">
        <title>The human liver-specific homolog of very long-chain acyl-CoA synthetase is cholate:CoA ligase.</title>
        <authorList>
            <person name="Steinberg S.J."/>
            <person name="Mihalik S.J."/>
            <person name="Kim D.G."/>
            <person name="Cuebas D.A."/>
            <person name="Watkins P.A."/>
        </authorList>
    </citation>
    <scope>FUNCTION</scope>
    <scope>CATALYTIC ACTIVITY</scope>
</reference>
<reference key="6">
    <citation type="journal article" date="2002" name="J. Biol. Chem.">
        <title>Participation of two members of the very long-chain acyl-CoA synthetase family in bile acid synthesis and recycling.</title>
        <authorList>
            <person name="Mihalik S.J."/>
            <person name="Steinberg S.J."/>
            <person name="Pei Z."/>
            <person name="Park J."/>
            <person name="Kim do G."/>
            <person name="Heinzer A.K."/>
            <person name="Dacremont G."/>
            <person name="Wanders R.J."/>
            <person name="Cuebas D.A."/>
            <person name="Smith K.D."/>
            <person name="Watkins P.A."/>
        </authorList>
    </citation>
    <scope>FUNCTION</scope>
    <scope>CATALYTIC ACTIVITY</scope>
    <scope>TOPOLOGY</scope>
    <scope>BIOPHYSICOCHEMICAL PROPERTIES</scope>
    <scope>ACTIVITY REGULATION</scope>
</reference>
<reference key="7">
    <citation type="journal article" date="2010" name="J. Biomol. Screen.">
        <title>Development and validation of a high-throughput screening assay for human long-chain fatty acid transport proteins 4 and 5.</title>
        <authorList>
            <person name="Zhou W."/>
            <person name="Madrid P."/>
            <person name="Fluitt A."/>
            <person name="Stahl A."/>
            <person name="Xie X.S."/>
        </authorList>
    </citation>
    <scope>FUNCTION</scope>
    <scope>TRANSPORT ACTIVITY</scope>
</reference>
<reference key="8">
    <citation type="journal article" date="2010" name="Am. J. Physiol.">
        <title>FATP2 is a hepatic fatty acid transporter and peroxisomal very long-chain acyl-CoA synthetase.</title>
        <authorList>
            <person name="Falcon A."/>
            <person name="Doege H."/>
            <person name="Fluitt A."/>
            <person name="Tsang B."/>
            <person name="Watson N."/>
            <person name="Kay M.A."/>
            <person name="Stahl A."/>
        </authorList>
    </citation>
    <scope>FUNCTION</scope>
    <scope>TRANSPORT ACTIVITY</scope>
</reference>
<reference key="9">
    <citation type="journal article" date="2014" name="J. Proteomics">
        <title>An enzyme assisted RP-RPLC approach for in-depth analysis of human liver phosphoproteome.</title>
        <authorList>
            <person name="Bian Y."/>
            <person name="Song C."/>
            <person name="Cheng K."/>
            <person name="Dong M."/>
            <person name="Wang F."/>
            <person name="Huang J."/>
            <person name="Sun D."/>
            <person name="Wang L."/>
            <person name="Ye M."/>
            <person name="Zou H."/>
        </authorList>
    </citation>
    <scope>PHOSPHORYLATION [LARGE SCALE ANALYSIS] AT SER-501</scope>
    <scope>IDENTIFICATION BY MASS SPECTROMETRY [LARGE SCALE ANALYSIS]</scope>
    <source>
        <tissue>Liver</tissue>
    </source>
</reference>
<name>S27A5_HUMAN</name>
<accession>Q9Y2P5</accession>
<accession>B3KVP6</accession>
<accession>B4DPQ1</accession>
<sequence length="690" mass="75385">MGVRQQLALLLLLLLLLWGLGQPVWPVAVALTLRWLLGDPTCCVLLGLAMLARPWLGPWVPHGLSLAAAALALTLLPARLPPGLRWLPADVIFLAKILHLGLKIRGCLSRQPPDTFVDAFERRARAQPGRALLVWTGPGAGSVTFGELDARACQAAWALKAELGDPASLCAGEPTALLVLASQAVPALCMWLGLAKLGCPTAWINPHGRGMPLAHSVLSSGARVLVVDPDLRESLEEILPKLQAENIRCFYLSHTSPTPGVGALGAALDAAPSHPVPADLRAGITWRSPALFIYTSGTTGLPKPAILTHERVLQMSKMLSLSGATADDVVYTVLPLYHVMGLVVGILGCLDLGATCVLAPKFSTSCFWDDCRQHGVTVILYVGELLRYLCNIPQQPEDRTHTVRLAMGNGLRADVWETFQQRFGPIRIWEVYGSTEGNMGLVNYVGRCGALGKMSCLLRMLSPFELVQFDMEAAEPVRDNQGFCIPVGLGEPGLLLTKVVSQQPFVGYRGPRELSERKLVRNVRQSGDVYYNTGDVLAMDREGFLYFRDRLGDTFRWKGENVSTHEVEGVLSQVDFLQQVNVYGVCVPGCEGKVGMAAVQLAPGQTFDGEKLYQHVRAWLPAYATPHFIRIQDAMEVTSTFKLMKTRLVREGFNVGIVVDPLFVLDNRAQSFRPLTAEMYQAVCEGTWRL</sequence>
<comment type="function">
    <text evidence="1 4 5 6 7 8">May mediate the import of long-chain fatty acids (LCFA) by facilitating their transport across cell membranes (PubMed:20448275, PubMed:20530735). Also catalyzes the ATP-dependent formation of fatty acyl-CoA using LCFA and very-long-chain fatty acids (VLCFA) as substrates (PubMed:10479480). Mainly functions as a bile acyl-CoA synthetase catalyzing the activation of bile acids via ATP-dependent formation of bile acid CoA thioesters which is necessary for their subsequent conjugation with glycine or taurine (PubMed:10749848, PubMed:11980911). Both primary bile acids (cholic acid and chenodeoxycholic acid) and secondary bile acids (deoxycholic acid and lithocholic acid) are the principal substrates (PubMed:10749848, PubMed:11980911). In vitro, activates 3-alpha,7-alpha,12-alpha-trihydroxy-5-beta-cholestanate ((25R)-3alpha,7alpha,12alpha-trihydroxy-5beta-cholestan-26-oate or THCA), the C27 precursor of cholic acid deriving from the de novo synthesis from cholesterol (PubMed:11980911). Plays an important role in hepatic fatty acid uptake and bile acid reconjugation and recycling but not in de novo synthesis of bile acids (By similarity).</text>
</comment>
<comment type="catalytic activity">
    <reaction evidence="7 8">
        <text>a fatty acid(in) = a fatty acid(out)</text>
        <dbReference type="Rhea" id="RHEA:38879"/>
        <dbReference type="ChEBI" id="CHEBI:28868"/>
    </reaction>
</comment>
<comment type="catalytic activity">
    <reaction evidence="4 5 6">
        <text>cholate + ATP + CoA = choloyl-CoA + AMP + diphosphate</text>
        <dbReference type="Rhea" id="RHEA:23532"/>
        <dbReference type="ChEBI" id="CHEBI:29747"/>
        <dbReference type="ChEBI" id="CHEBI:30616"/>
        <dbReference type="ChEBI" id="CHEBI:33019"/>
        <dbReference type="ChEBI" id="CHEBI:57287"/>
        <dbReference type="ChEBI" id="CHEBI:57373"/>
        <dbReference type="ChEBI" id="CHEBI:456215"/>
        <dbReference type="EC" id="6.2.1.7"/>
    </reaction>
    <physiologicalReaction direction="left-to-right" evidence="16 17 18">
        <dbReference type="Rhea" id="RHEA:23533"/>
    </physiologicalReaction>
</comment>
<comment type="catalytic activity">
    <reaction evidence="6">
        <text>chenodeoxycholate + ATP + CoA = chenodeoxycholoyl-CoA + AMP + diphosphate</text>
        <dbReference type="Rhea" id="RHEA:43764"/>
        <dbReference type="ChEBI" id="CHEBI:30616"/>
        <dbReference type="ChEBI" id="CHEBI:33019"/>
        <dbReference type="ChEBI" id="CHEBI:36234"/>
        <dbReference type="ChEBI" id="CHEBI:57287"/>
        <dbReference type="ChEBI" id="CHEBI:62989"/>
        <dbReference type="ChEBI" id="CHEBI:456215"/>
    </reaction>
    <physiologicalReaction direction="left-to-right" evidence="18">
        <dbReference type="Rhea" id="RHEA:43765"/>
    </physiologicalReaction>
</comment>
<comment type="catalytic activity">
    <reaction evidence="6">
        <text>deoxycholate + ATP + CoA = deoxycholoyl-CoA + AMP + diphosphate</text>
        <dbReference type="Rhea" id="RHEA:47128"/>
        <dbReference type="ChEBI" id="CHEBI:23614"/>
        <dbReference type="ChEBI" id="CHEBI:30616"/>
        <dbReference type="ChEBI" id="CHEBI:33019"/>
        <dbReference type="ChEBI" id="CHEBI:57287"/>
        <dbReference type="ChEBI" id="CHEBI:58810"/>
        <dbReference type="ChEBI" id="CHEBI:456215"/>
    </reaction>
    <physiologicalReaction direction="left-to-right" evidence="18">
        <dbReference type="Rhea" id="RHEA:47129"/>
    </physiologicalReaction>
</comment>
<comment type="catalytic activity">
    <reaction evidence="6">
        <text>lithocholate + ATP + CoA = lithocholoyl-CoA + AMP + diphosphate</text>
        <dbReference type="Rhea" id="RHEA:47136"/>
        <dbReference type="ChEBI" id="CHEBI:29744"/>
        <dbReference type="ChEBI" id="CHEBI:30616"/>
        <dbReference type="ChEBI" id="CHEBI:33019"/>
        <dbReference type="ChEBI" id="CHEBI:57287"/>
        <dbReference type="ChEBI" id="CHEBI:87438"/>
        <dbReference type="ChEBI" id="CHEBI:456215"/>
    </reaction>
    <physiologicalReaction direction="left-to-right" evidence="18">
        <dbReference type="Rhea" id="RHEA:47137"/>
    </physiologicalReaction>
</comment>
<comment type="catalytic activity">
    <reaction evidence="6">
        <text>(25R)-3alpha,7alpha,12alpha-trihydroxy-5beta-cholestan-26-oate + ATP + CoA = (25R)-3alpha,7alpha,12alpha-trihydroxy-5beta-cholestan-26-oyl-CoA + AMP + diphosphate</text>
        <dbReference type="Rhea" id="RHEA:22976"/>
        <dbReference type="ChEBI" id="CHEBI:30616"/>
        <dbReference type="ChEBI" id="CHEBI:33019"/>
        <dbReference type="ChEBI" id="CHEBI:57287"/>
        <dbReference type="ChEBI" id="CHEBI:58677"/>
        <dbReference type="ChEBI" id="CHEBI:58734"/>
        <dbReference type="ChEBI" id="CHEBI:456215"/>
        <dbReference type="EC" id="6.2.1.7"/>
    </reaction>
    <physiologicalReaction direction="left-to-right" evidence="18">
        <dbReference type="Rhea" id="RHEA:22977"/>
    </physiologicalReaction>
</comment>
<comment type="catalytic activity">
    <reaction evidence="4">
        <text>a very long-chain fatty acid + ATP + CoA = a very long-chain fatty acyl-CoA + AMP + diphosphate</text>
        <dbReference type="Rhea" id="RHEA:54536"/>
        <dbReference type="ChEBI" id="CHEBI:30616"/>
        <dbReference type="ChEBI" id="CHEBI:33019"/>
        <dbReference type="ChEBI" id="CHEBI:57287"/>
        <dbReference type="ChEBI" id="CHEBI:58950"/>
        <dbReference type="ChEBI" id="CHEBI:138261"/>
        <dbReference type="ChEBI" id="CHEBI:456215"/>
    </reaction>
    <physiologicalReaction direction="left-to-right" evidence="16">
        <dbReference type="Rhea" id="RHEA:54537"/>
    </physiologicalReaction>
</comment>
<comment type="catalytic activity">
    <reaction evidence="4">
        <text>tetracosanoate + ATP + CoA = tetracosanoyl-CoA + AMP + diphosphate</text>
        <dbReference type="Rhea" id="RHEA:33639"/>
        <dbReference type="ChEBI" id="CHEBI:30616"/>
        <dbReference type="ChEBI" id="CHEBI:31014"/>
        <dbReference type="ChEBI" id="CHEBI:33019"/>
        <dbReference type="ChEBI" id="CHEBI:57287"/>
        <dbReference type="ChEBI" id="CHEBI:65052"/>
        <dbReference type="ChEBI" id="CHEBI:456215"/>
    </reaction>
    <physiologicalReaction direction="left-to-right" evidence="16">
        <dbReference type="Rhea" id="RHEA:33640"/>
    </physiologicalReaction>
</comment>
<comment type="catalytic activity">
    <reaction evidence="4">
        <text>hexacosanoate + ATP + CoA = hexacosanoyl-CoA + AMP + diphosphate</text>
        <dbReference type="Rhea" id="RHEA:43748"/>
        <dbReference type="ChEBI" id="CHEBI:30616"/>
        <dbReference type="ChEBI" id="CHEBI:31013"/>
        <dbReference type="ChEBI" id="CHEBI:33019"/>
        <dbReference type="ChEBI" id="CHEBI:57287"/>
        <dbReference type="ChEBI" id="CHEBI:64868"/>
        <dbReference type="ChEBI" id="CHEBI:456215"/>
    </reaction>
    <physiologicalReaction direction="left-to-right" evidence="16">
        <dbReference type="Rhea" id="RHEA:43749"/>
    </physiologicalReaction>
</comment>
<comment type="catalytic activity">
    <reaction evidence="4">
        <text>a long-chain fatty acid + ATP + CoA = a long-chain fatty acyl-CoA + AMP + diphosphate</text>
        <dbReference type="Rhea" id="RHEA:15421"/>
        <dbReference type="ChEBI" id="CHEBI:30616"/>
        <dbReference type="ChEBI" id="CHEBI:33019"/>
        <dbReference type="ChEBI" id="CHEBI:57287"/>
        <dbReference type="ChEBI" id="CHEBI:57560"/>
        <dbReference type="ChEBI" id="CHEBI:83139"/>
        <dbReference type="ChEBI" id="CHEBI:456215"/>
        <dbReference type="EC" id="6.2.1.3"/>
    </reaction>
    <physiologicalReaction direction="left-to-right" evidence="16">
        <dbReference type="Rhea" id="RHEA:15422"/>
    </physiologicalReaction>
</comment>
<comment type="catalytic activity">
    <reaction evidence="4">
        <text>octadecanoate + ATP + CoA = octadecanoyl-CoA + AMP + diphosphate</text>
        <dbReference type="Rhea" id="RHEA:33615"/>
        <dbReference type="ChEBI" id="CHEBI:25629"/>
        <dbReference type="ChEBI" id="CHEBI:30616"/>
        <dbReference type="ChEBI" id="CHEBI:33019"/>
        <dbReference type="ChEBI" id="CHEBI:57287"/>
        <dbReference type="ChEBI" id="CHEBI:57394"/>
        <dbReference type="ChEBI" id="CHEBI:456215"/>
    </reaction>
    <physiologicalReaction direction="left-to-right" evidence="16">
        <dbReference type="Rhea" id="RHEA:33616"/>
    </physiologicalReaction>
</comment>
<comment type="catalytic activity">
    <reaction evidence="4">
        <text>eicosanoate + ATP + CoA = eicosanoyl-CoA + AMP + diphosphate</text>
        <dbReference type="Rhea" id="RHEA:46208"/>
        <dbReference type="ChEBI" id="CHEBI:30616"/>
        <dbReference type="ChEBI" id="CHEBI:32360"/>
        <dbReference type="ChEBI" id="CHEBI:33019"/>
        <dbReference type="ChEBI" id="CHEBI:57287"/>
        <dbReference type="ChEBI" id="CHEBI:57380"/>
        <dbReference type="ChEBI" id="CHEBI:456215"/>
    </reaction>
    <physiologicalReaction direction="left-to-right" evidence="16">
        <dbReference type="Rhea" id="RHEA:46209"/>
    </physiologicalReaction>
</comment>
<comment type="activity regulation">
    <text evidence="6">3-alpha,7-alpha,12-alpha-trihydroxy-5-beta-cholestanate (THCA) inhibits the activation of cholate.</text>
</comment>
<comment type="biophysicochemical properties">
    <kinetics>
        <KM evidence="6">2.8 uM for cholate</KM>
        <Vmax evidence="6">3.8 nmol/min/mg enzyme with cholate as substrate for bile acyl-CoA synthetase activity</Vmax>
    </kinetics>
</comment>
<comment type="interaction">
    <interactant intactId="EBI-12176609">
        <id>Q9Y2P5</id>
    </interactant>
    <interactant intactId="EBI-16439278">
        <id>Q6FHY5</id>
        <label>MEOX2</label>
    </interactant>
    <organismsDiffer>false</organismsDiffer>
    <experiments>3</experiments>
</comment>
<comment type="subcellular location">
    <subcellularLocation>
        <location evidence="4">Endoplasmic reticulum membrane</location>
        <topology evidence="3">Multi-pass membrane protein</topology>
    </subcellularLocation>
    <subcellularLocation>
        <location evidence="2">Microsome</location>
    </subcellularLocation>
    <subcellularLocation>
        <location evidence="1">Cell membrane</location>
        <topology evidence="3">Multi-pass membrane protein</topology>
    </subcellularLocation>
</comment>
<comment type="alternative products">
    <event type="alternative splicing"/>
    <isoform>
        <id>Q9Y2P5-1</id>
        <name>1</name>
        <sequence type="displayed"/>
    </isoform>
    <isoform>
        <id>Q9Y2P5-2</id>
        <name>2</name>
        <sequence type="described" ref="VSP_055810"/>
    </isoform>
</comment>
<comment type="tissue specificity">
    <text evidence="4">Predominantly expressed in liver.</text>
</comment>
<comment type="similarity">
    <text evidence="15">Belongs to the ATP-dependent AMP-binding enzyme family.</text>
</comment>
<dbReference type="EC" id="6.2.1.7" evidence="4 5 6"/>
<dbReference type="EC" id="6.2.1.3" evidence="4"/>
<dbReference type="EC" id="6.2.1.-" evidence="4"/>
<dbReference type="EMBL" id="AF064255">
    <property type="protein sequence ID" value="AAD29444.1"/>
    <property type="molecule type" value="mRNA"/>
</dbReference>
<dbReference type="EMBL" id="AK123036">
    <property type="protein sequence ID" value="BAG53858.1"/>
    <property type="molecule type" value="mRNA"/>
</dbReference>
<dbReference type="EMBL" id="AK298446">
    <property type="protein sequence ID" value="BAG60663.1"/>
    <property type="molecule type" value="mRNA"/>
</dbReference>
<dbReference type="EMBL" id="AC012313">
    <property type="status" value="NOT_ANNOTATED_CDS"/>
    <property type="molecule type" value="Genomic_DNA"/>
</dbReference>
<dbReference type="EMBL" id="CH471135">
    <property type="protein sequence ID" value="EAW72601.1"/>
    <property type="molecule type" value="Genomic_DNA"/>
</dbReference>
<dbReference type="CCDS" id="CCDS12983.1">
    <molecule id="Q9Y2P5-1"/>
</dbReference>
<dbReference type="CCDS" id="CCDS82415.1">
    <molecule id="Q9Y2P5-2"/>
</dbReference>
<dbReference type="RefSeq" id="NP_001308125.1">
    <molecule id="Q9Y2P5-2"/>
    <property type="nucleotide sequence ID" value="NM_001321196.2"/>
</dbReference>
<dbReference type="RefSeq" id="NP_036386.1">
    <molecule id="Q9Y2P5-1"/>
    <property type="nucleotide sequence ID" value="NM_012254.3"/>
</dbReference>
<dbReference type="SMR" id="Q9Y2P5"/>
<dbReference type="BioGRID" id="116191">
    <property type="interactions" value="9"/>
</dbReference>
<dbReference type="FunCoup" id="Q9Y2P5">
    <property type="interactions" value="264"/>
</dbReference>
<dbReference type="IntAct" id="Q9Y2P5">
    <property type="interactions" value="4"/>
</dbReference>
<dbReference type="STRING" id="9606.ENSP00000263093"/>
<dbReference type="ChEMBL" id="CHEMBL5196"/>
<dbReference type="SwissLipids" id="SLP:000000429"/>
<dbReference type="SwissLipids" id="SLP:000001315">
    <molecule id="Q9Y2P5-1"/>
</dbReference>
<dbReference type="TCDB" id="4.C.1.1.13">
    <property type="family name" value="the fatty acid group translocation (fat) family"/>
</dbReference>
<dbReference type="GlyGen" id="Q9Y2P5">
    <property type="glycosylation" value="1 site"/>
</dbReference>
<dbReference type="iPTMnet" id="Q9Y2P5"/>
<dbReference type="PhosphoSitePlus" id="Q9Y2P5"/>
<dbReference type="BioMuta" id="SLC27A5"/>
<dbReference type="DMDM" id="74739456"/>
<dbReference type="jPOST" id="Q9Y2P5"/>
<dbReference type="MassIVE" id="Q9Y2P5"/>
<dbReference type="PaxDb" id="9606-ENSP00000263093"/>
<dbReference type="PeptideAtlas" id="Q9Y2P5"/>
<dbReference type="ProteomicsDB" id="85854">
    <molecule id="Q9Y2P5-1"/>
</dbReference>
<dbReference type="Antibodypedia" id="1943">
    <property type="antibodies" value="309 antibodies from 27 providers"/>
</dbReference>
<dbReference type="DNASU" id="10998"/>
<dbReference type="Ensembl" id="ENST00000263093.7">
    <molecule id="Q9Y2P5-1"/>
    <property type="protein sequence ID" value="ENSP00000263093.2"/>
    <property type="gene ID" value="ENSG00000083807.10"/>
</dbReference>
<dbReference type="Ensembl" id="ENST00000601355.1">
    <molecule id="Q9Y2P5-2"/>
    <property type="protein sequence ID" value="ENSP00000470368.1"/>
    <property type="gene ID" value="ENSG00000083807.10"/>
</dbReference>
<dbReference type="GeneID" id="10998"/>
<dbReference type="KEGG" id="hsa:10998"/>
<dbReference type="MANE-Select" id="ENST00000263093.7">
    <property type="protein sequence ID" value="ENSP00000263093.2"/>
    <property type="RefSeq nucleotide sequence ID" value="NM_012254.3"/>
    <property type="RefSeq protein sequence ID" value="NP_036386.1"/>
</dbReference>
<dbReference type="UCSC" id="uc002qtc.3">
    <molecule id="Q9Y2P5-1"/>
    <property type="organism name" value="human"/>
</dbReference>
<dbReference type="AGR" id="HGNC:10999"/>
<dbReference type="CTD" id="10998"/>
<dbReference type="DisGeNET" id="10998"/>
<dbReference type="GeneCards" id="SLC27A5"/>
<dbReference type="HGNC" id="HGNC:10999">
    <property type="gene designation" value="SLC27A5"/>
</dbReference>
<dbReference type="HPA" id="ENSG00000083807">
    <property type="expression patterns" value="Tissue enriched (liver)"/>
</dbReference>
<dbReference type="MalaCards" id="SLC27A5"/>
<dbReference type="MIM" id="603314">
    <property type="type" value="gene"/>
</dbReference>
<dbReference type="neXtProt" id="NX_Q9Y2P5"/>
<dbReference type="OpenTargets" id="ENSG00000083807"/>
<dbReference type="PharmGKB" id="PA35873"/>
<dbReference type="VEuPathDB" id="HostDB:ENSG00000083807"/>
<dbReference type="eggNOG" id="KOG1179">
    <property type="taxonomic scope" value="Eukaryota"/>
</dbReference>
<dbReference type="GeneTree" id="ENSGT00940000157947"/>
<dbReference type="HOGENOM" id="CLU_000022_46_2_1"/>
<dbReference type="InParanoid" id="Q9Y2P5"/>
<dbReference type="OMA" id="ATFFTYV"/>
<dbReference type="OrthoDB" id="288590at2759"/>
<dbReference type="PAN-GO" id="Q9Y2P5">
    <property type="GO annotations" value="10 GO annotations based on evolutionary models"/>
</dbReference>
<dbReference type="PhylomeDB" id="Q9Y2P5"/>
<dbReference type="TreeFam" id="TF313430"/>
<dbReference type="PathwayCommons" id="Q9Y2P5"/>
<dbReference type="Reactome" id="R-HSA-159418">
    <property type="pathway name" value="Recycling of bile acids and salts"/>
</dbReference>
<dbReference type="Reactome" id="R-HSA-193368">
    <property type="pathway name" value="Synthesis of bile acids and bile salts via 7alpha-hydroxycholesterol"/>
</dbReference>
<dbReference type="Reactome" id="R-HSA-193775">
    <property type="pathway name" value="Synthesis of bile acids and bile salts via 24-hydroxycholesterol"/>
</dbReference>
<dbReference type="SignaLink" id="Q9Y2P5"/>
<dbReference type="SIGNOR" id="Q9Y2P5"/>
<dbReference type="BioGRID-ORCS" id="10998">
    <property type="hits" value="25 hits in 1158 CRISPR screens"/>
</dbReference>
<dbReference type="ChiTaRS" id="SLC27A5">
    <property type="organism name" value="human"/>
</dbReference>
<dbReference type="GeneWiki" id="SLC27A5"/>
<dbReference type="GenomeRNAi" id="10998"/>
<dbReference type="Pharos" id="Q9Y2P5">
    <property type="development level" value="Tbio"/>
</dbReference>
<dbReference type="PRO" id="PR:Q9Y2P5"/>
<dbReference type="Proteomes" id="UP000005640">
    <property type="component" value="Chromosome 19"/>
</dbReference>
<dbReference type="RNAct" id="Q9Y2P5">
    <property type="molecule type" value="protein"/>
</dbReference>
<dbReference type="Bgee" id="ENSG00000083807">
    <property type="expression patterns" value="Expressed in right lobe of liver and 128 other cell types or tissues"/>
</dbReference>
<dbReference type="ExpressionAtlas" id="Q9Y2P5">
    <property type="expression patterns" value="baseline and differential"/>
</dbReference>
<dbReference type="GO" id="GO:0009925">
    <property type="term" value="C:basal plasma membrane"/>
    <property type="evidence" value="ECO:0007669"/>
    <property type="project" value="Ensembl"/>
</dbReference>
<dbReference type="GO" id="GO:0005783">
    <property type="term" value="C:endoplasmic reticulum"/>
    <property type="evidence" value="ECO:0000314"/>
    <property type="project" value="UniProtKB"/>
</dbReference>
<dbReference type="GO" id="GO:0005789">
    <property type="term" value="C:endoplasmic reticulum membrane"/>
    <property type="evidence" value="ECO:0000314"/>
    <property type="project" value="UniProtKB"/>
</dbReference>
<dbReference type="GO" id="GO:0005886">
    <property type="term" value="C:plasma membrane"/>
    <property type="evidence" value="ECO:0000318"/>
    <property type="project" value="GO_Central"/>
</dbReference>
<dbReference type="GO" id="GO:0032991">
    <property type="term" value="C:protein-containing complex"/>
    <property type="evidence" value="ECO:0007669"/>
    <property type="project" value="Ensembl"/>
</dbReference>
<dbReference type="GO" id="GO:0005524">
    <property type="term" value="F:ATP binding"/>
    <property type="evidence" value="ECO:0007669"/>
    <property type="project" value="UniProtKB-KW"/>
</dbReference>
<dbReference type="GO" id="GO:0047747">
    <property type="term" value="F:cholate-CoA ligase activity"/>
    <property type="evidence" value="ECO:0000314"/>
    <property type="project" value="UniProtKB"/>
</dbReference>
<dbReference type="GO" id="GO:0005324">
    <property type="term" value="F:long-chain fatty acid transmembrane transporter activity"/>
    <property type="evidence" value="ECO:0000314"/>
    <property type="project" value="UniProtKB"/>
</dbReference>
<dbReference type="GO" id="GO:0004467">
    <property type="term" value="F:long-chain fatty acid-CoA ligase activity"/>
    <property type="evidence" value="ECO:0000318"/>
    <property type="project" value="GO_Central"/>
</dbReference>
<dbReference type="GO" id="GO:0016491">
    <property type="term" value="F:oxidoreductase activity"/>
    <property type="evidence" value="ECO:0007669"/>
    <property type="project" value="UniProtKB-KW"/>
</dbReference>
<dbReference type="GO" id="GO:0044877">
    <property type="term" value="F:protein-containing complex binding"/>
    <property type="evidence" value="ECO:0007669"/>
    <property type="project" value="Ensembl"/>
</dbReference>
<dbReference type="GO" id="GO:0031957">
    <property type="term" value="F:very long-chain fatty acid-CoA ligase activity"/>
    <property type="evidence" value="ECO:0000314"/>
    <property type="project" value="UniProtKB"/>
</dbReference>
<dbReference type="GO" id="GO:0015721">
    <property type="term" value="P:bile acid and bile salt transport"/>
    <property type="evidence" value="ECO:0000304"/>
    <property type="project" value="Reactome"/>
</dbReference>
<dbReference type="GO" id="GO:0006699">
    <property type="term" value="P:bile acid biosynthetic process"/>
    <property type="evidence" value="ECO:0000314"/>
    <property type="project" value="UniProtKB"/>
</dbReference>
<dbReference type="GO" id="GO:0008206">
    <property type="term" value="P:bile acid metabolic process"/>
    <property type="evidence" value="ECO:0000318"/>
    <property type="project" value="GO_Central"/>
</dbReference>
<dbReference type="GO" id="GO:0051649">
    <property type="term" value="P:establishment of localization in cell"/>
    <property type="evidence" value="ECO:0007669"/>
    <property type="project" value="Ensembl"/>
</dbReference>
<dbReference type="GO" id="GO:0046951">
    <property type="term" value="P:ketone body biosynthetic process"/>
    <property type="evidence" value="ECO:0007669"/>
    <property type="project" value="Ensembl"/>
</dbReference>
<dbReference type="GO" id="GO:0015911">
    <property type="term" value="P:long-chain fatty acid import across plasma membrane"/>
    <property type="evidence" value="ECO:0007669"/>
    <property type="project" value="Ensembl"/>
</dbReference>
<dbReference type="GO" id="GO:0044539">
    <property type="term" value="P:long-chain fatty acid import into cell"/>
    <property type="evidence" value="ECO:0000318"/>
    <property type="project" value="GO_Central"/>
</dbReference>
<dbReference type="GO" id="GO:0001676">
    <property type="term" value="P:long-chain fatty acid metabolic process"/>
    <property type="evidence" value="ECO:0000318"/>
    <property type="project" value="GO_Central"/>
</dbReference>
<dbReference type="GO" id="GO:0006642">
    <property type="term" value="P:triglyceride mobilization"/>
    <property type="evidence" value="ECO:0007669"/>
    <property type="project" value="Ensembl"/>
</dbReference>
<dbReference type="GO" id="GO:0000038">
    <property type="term" value="P:very long-chain fatty acid metabolic process"/>
    <property type="evidence" value="ECO:0000314"/>
    <property type="project" value="UniProtKB"/>
</dbReference>
<dbReference type="CDD" id="cd05938">
    <property type="entry name" value="hsFATP2a_ACSVL_like"/>
    <property type="match status" value="1"/>
</dbReference>
<dbReference type="FunFam" id="3.30.300.30:FF:000002">
    <property type="entry name" value="Long-chain fatty acid transport protein 1"/>
    <property type="match status" value="1"/>
</dbReference>
<dbReference type="FunFam" id="3.40.50.12780:FF:000005">
    <property type="entry name" value="Solute carrier family 27 member 6"/>
    <property type="match status" value="1"/>
</dbReference>
<dbReference type="Gene3D" id="3.30.300.30">
    <property type="match status" value="1"/>
</dbReference>
<dbReference type="Gene3D" id="3.40.50.12780">
    <property type="entry name" value="N-terminal domain of ligase-like"/>
    <property type="match status" value="1"/>
</dbReference>
<dbReference type="InterPro" id="IPR025110">
    <property type="entry name" value="AMP-bd_C"/>
</dbReference>
<dbReference type="InterPro" id="IPR045851">
    <property type="entry name" value="AMP-bd_C_sf"/>
</dbReference>
<dbReference type="InterPro" id="IPR020845">
    <property type="entry name" value="AMP-binding_CS"/>
</dbReference>
<dbReference type="InterPro" id="IPR000873">
    <property type="entry name" value="AMP-dep_synth/lig_dom"/>
</dbReference>
<dbReference type="InterPro" id="IPR042099">
    <property type="entry name" value="ANL_N_sf"/>
</dbReference>
<dbReference type="PANTHER" id="PTHR43107">
    <property type="entry name" value="LONG-CHAIN FATTY ACID TRANSPORT PROTEIN"/>
    <property type="match status" value="1"/>
</dbReference>
<dbReference type="PANTHER" id="PTHR43107:SF25">
    <property type="entry name" value="LONG-CHAIN FATTY ACID TRANSPORT PROTEIN 5"/>
    <property type="match status" value="1"/>
</dbReference>
<dbReference type="Pfam" id="PF00501">
    <property type="entry name" value="AMP-binding"/>
    <property type="match status" value="1"/>
</dbReference>
<dbReference type="Pfam" id="PF13193">
    <property type="entry name" value="AMP-binding_C"/>
    <property type="match status" value="1"/>
</dbReference>
<dbReference type="SUPFAM" id="SSF56801">
    <property type="entry name" value="Acetyl-CoA synthetase-like"/>
    <property type="match status" value="1"/>
</dbReference>
<dbReference type="PROSITE" id="PS00455">
    <property type="entry name" value="AMP_BINDING"/>
    <property type="match status" value="1"/>
</dbReference>
<protein>
    <recommendedName>
        <fullName evidence="15">Long-chain fatty acid transport protein 5</fullName>
        <shortName evidence="13 14">FATP-5</shortName>
        <shortName evidence="14">Fatty acid transport protein 5</shortName>
    </recommendedName>
    <alternativeName>
        <fullName evidence="2">Bile acid-CoA ligase</fullName>
        <shortName evidence="2">BA-CoA ligase</shortName>
        <shortName evidence="2">BAL</shortName>
    </alternativeName>
    <alternativeName>
        <fullName evidence="11">Bile acyl-CoA synthetase</fullName>
        <shortName evidence="11">BACS</shortName>
        <ecNumber evidence="4 5 6">6.2.1.7</ecNumber>
    </alternativeName>
    <alternativeName>
        <fullName evidence="10">Cholate--CoA ligase</fullName>
    </alternativeName>
    <alternativeName>
        <fullName>Fatty-acid-coenzyme A ligase, very long-chain 3</fullName>
    </alternativeName>
    <alternativeName>
        <fullName>Long-chain-fatty-acid--CoA ligase</fullName>
        <ecNumber evidence="4">6.2.1.3</ecNumber>
    </alternativeName>
    <alternativeName>
        <fullName>Solute carrier family 27 member 5</fullName>
    </alternativeName>
    <alternativeName>
        <fullName evidence="9 10">Very long-chain acyl-CoA synthetase homolog 2</fullName>
        <shortName evidence="9 10 11">VLCS-H2</shortName>
        <shortName evidence="9 10 11">VLCSH2</shortName>
        <ecNumber evidence="4">6.2.1.-</ecNumber>
    </alternativeName>
    <alternativeName>
        <fullName evidence="1">Very long-chain acyl-CoA synthetase-related protein</fullName>
        <shortName evidence="1">VLACS-related</shortName>
        <shortName evidence="1">VLACSR</shortName>
    </alternativeName>
</protein>
<feature type="chain" id="PRO_0000193213" description="Long-chain fatty acid transport protein 5">
    <location>
        <begin position="1"/>
        <end position="690"/>
    </location>
</feature>
<feature type="topological domain" description="Cytoplasmic" evidence="18">
    <location>
        <begin position="1"/>
        <end position="30"/>
    </location>
</feature>
<feature type="transmembrane region" description="Helical" evidence="3">
    <location>
        <begin position="31"/>
        <end position="51"/>
    </location>
</feature>
<feature type="transmembrane region" description="Helical" evidence="3">
    <location>
        <begin position="56"/>
        <end position="76"/>
    </location>
</feature>
<feature type="topological domain" description="Cytoplasmic" evidence="18">
    <location>
        <begin position="77"/>
        <end position="690"/>
    </location>
</feature>
<feature type="binding site" evidence="3">
    <location>
        <begin position="292"/>
        <end position="303"/>
    </location>
    <ligand>
        <name>AMP</name>
        <dbReference type="ChEBI" id="CHEBI:456215"/>
    </ligand>
</feature>
<feature type="modified residue" description="Phosphoserine" evidence="19">
    <location>
        <position position="501"/>
    </location>
</feature>
<feature type="splice variant" id="VSP_055810" description="In isoform 2." evidence="12">
    <location>
        <begin position="146"/>
        <end position="229"/>
    </location>
</feature>
<feature type="sequence variant" id="VAR_048243" description="In dbSNP:rs35350976.">
    <original>M</original>
    <variation>T</variation>
    <location>
        <position position="50"/>
    </location>
</feature>
<feature type="sequence variant" id="VAR_048244" description="In dbSNP:rs34415062.">
    <original>R</original>
    <variation>W</variation>
    <location>
        <position position="53"/>
    </location>
</feature>